<accession>C0HL97</accession>
<proteinExistence type="evidence at protein level"/>
<name>VM3_CROVE</name>
<evidence type="ECO:0000250" key="1">
    <source>
        <dbReference type="UniProtKB" id="O93523"/>
    </source>
</evidence>
<evidence type="ECO:0000269" key="2">
    <source>
    </source>
</evidence>
<evidence type="ECO:0000303" key="3">
    <source>
    </source>
</evidence>
<evidence type="ECO:0000305" key="4"/>
<evidence type="ECO:0000305" key="5">
    <source>
    </source>
</evidence>
<organism evidence="3">
    <name type="scientific">Crotalus vegrandis</name>
    <name type="common">Uracoan rattlesnake</name>
    <name type="synonym">Crotalus durissus vegrandis</name>
    <dbReference type="NCBI Taxonomy" id="184545"/>
    <lineage>
        <taxon>Eukaryota</taxon>
        <taxon>Metazoa</taxon>
        <taxon>Chordata</taxon>
        <taxon>Craniata</taxon>
        <taxon>Vertebrata</taxon>
        <taxon>Euteleostomi</taxon>
        <taxon>Lepidosauria</taxon>
        <taxon>Squamata</taxon>
        <taxon>Bifurcata</taxon>
        <taxon>Unidentata</taxon>
        <taxon>Episquamata</taxon>
        <taxon>Toxicofera</taxon>
        <taxon>Serpentes</taxon>
        <taxon>Colubroidea</taxon>
        <taxon>Viperidae</taxon>
        <taxon>Crotalinae</taxon>
        <taxon>Crotalus</taxon>
    </lineage>
</organism>
<reference evidence="4" key="1">
    <citation type="journal article" date="2001" name="Biochim. Biophys. Acta">
        <title>Purification and characterisation of a haemorrhagic fraction from the venom of the Uracoan rattlesnake Crotalus vegrandis.</title>
        <authorList>
            <person name="Aguilar I."/>
            <person name="Giron M.E."/>
            <person name="Rodriguez-Acosta A."/>
        </authorList>
    </citation>
    <scope>PROTEIN SEQUENCE</scope>
    <scope>FUNCTION</scope>
    <scope>CATALYTIC ACTIVITY</scope>
    <scope>ACTIVITY REGULATION</scope>
    <scope>BIOPHYSICOCHEMICAL PROPERTIES</scope>
    <scope>SUBUNIT</scope>
    <scope>SUBCELLULAR LOCATION</scope>
    <source>
        <tissue evidence="3">Venom</tissue>
    </source>
</reference>
<dbReference type="EC" id="3.4.24.-" evidence="2"/>
<dbReference type="GO" id="GO:0005576">
    <property type="term" value="C:extracellular region"/>
    <property type="evidence" value="ECO:0000314"/>
    <property type="project" value="UniProtKB"/>
</dbReference>
<dbReference type="GO" id="GO:0046872">
    <property type="term" value="F:metal ion binding"/>
    <property type="evidence" value="ECO:0007669"/>
    <property type="project" value="UniProtKB-KW"/>
</dbReference>
<dbReference type="GO" id="GO:0004222">
    <property type="term" value="F:metalloendopeptidase activity"/>
    <property type="evidence" value="ECO:0000314"/>
    <property type="project" value="UniProtKB"/>
</dbReference>
<dbReference type="GO" id="GO:0090729">
    <property type="term" value="F:toxin activity"/>
    <property type="evidence" value="ECO:0007669"/>
    <property type="project" value="UniProtKB-KW"/>
</dbReference>
<dbReference type="GO" id="GO:0006508">
    <property type="term" value="P:proteolysis"/>
    <property type="evidence" value="ECO:0007669"/>
    <property type="project" value="UniProtKB-KW"/>
</dbReference>
<dbReference type="GO" id="GO:0044358">
    <property type="term" value="P:venom-mediated hemorrhage in another organism"/>
    <property type="evidence" value="ECO:0000314"/>
    <property type="project" value="UniProtKB"/>
</dbReference>
<sequence>HQKYNPFRFVELVLVVDKAM</sequence>
<keyword id="KW-0903">Direct protein sequencing</keyword>
<keyword id="KW-1206">Fibrinogenolytic toxin</keyword>
<keyword id="KW-1200">Hemorrhagic toxin</keyword>
<keyword id="KW-1199">Hemostasis impairing toxin</keyword>
<keyword id="KW-0378">Hydrolase</keyword>
<keyword id="KW-0479">Metal-binding</keyword>
<keyword id="KW-0482">Metalloprotease</keyword>
<keyword id="KW-0645">Protease</keyword>
<keyword id="KW-0964">Secreted</keyword>
<keyword id="KW-0800">Toxin</keyword>
<keyword id="KW-0862">Zinc</keyword>
<comment type="function">
    <text evidence="2">Snake venom zinc metalloprotease that possesses hemorrhagic activity (minimum hemorrhagic dose, MHD=4.7 ug) when injected intradermally into mice. Degrades the alpha-chain of fibrinogen (FGA).</text>
</comment>
<comment type="cofactor">
    <cofactor evidence="1">
        <name>Zn(2+)</name>
        <dbReference type="ChEBI" id="CHEBI:29105"/>
    </cofactor>
    <text evidence="1">Binds 1 zinc ion per subunit.</text>
</comment>
<comment type="activity regulation">
    <text evidence="2">Inhibited by ethylenediaminetetraacetic acid (EDTA) and 1,10-phenanthroline. Not inhibited by tosyl-L-lysine chloromethyl ketone (TCLK) and phenylmethanesulfonylfluoride (PMSF).</text>
</comment>
<comment type="biophysicochemical properties">
    <phDependence>
        <text evidence="2">Optimum pH is 7-9.</text>
    </phDependence>
    <temperatureDependence>
        <text evidence="2">Activity is stable between 20-40 degrees Celsius, decreases at higher temperatures and is lost at 70 degrees Celsius.</text>
    </temperatureDependence>
</comment>
<comment type="subunit">
    <text evidence="2">Monomer.</text>
</comment>
<comment type="subcellular location">
    <subcellularLocation>
        <location evidence="2">Secreted</location>
    </subcellularLocation>
</comment>
<comment type="tissue specificity">
    <text evidence="5">Expressed by the venom gland.</text>
</comment>
<comment type="similarity">
    <text evidence="4">Belongs to the venom metalloproteinase (M12B) family. P-III subfamily.</text>
</comment>
<protein>
    <recommendedName>
        <fullName evidence="5">Zinc metalloproteinase-disintegrin-like uracoina-1</fullName>
        <ecNumber evidence="2">3.4.24.-</ecNumber>
    </recommendedName>
    <alternativeName>
        <fullName evidence="1">Snake venom metalloprotease</fullName>
        <shortName evidence="1">SVMP</shortName>
    </alternativeName>
</protein>
<feature type="chain" id="PRO_0000444119" description="Zinc metalloproteinase-disintegrin-like uracoina-1" evidence="2">
    <location>
        <begin position="1"/>
        <end position="20" status="greater than"/>
    </location>
</feature>
<feature type="non-terminal residue" evidence="3">
    <location>
        <position position="20"/>
    </location>
</feature>